<reference key="1">
    <citation type="submission" date="2004-03" db="EMBL/GenBank/DDBJ databases">
        <authorList>
            <consortium name="NIH - Zebrafish Gene Collection (ZGC) project"/>
        </authorList>
    </citation>
    <scope>NUCLEOTIDE SEQUENCE [LARGE SCALE MRNA]</scope>
    <source>
        <tissue>Kidney</tissue>
    </source>
</reference>
<sequence length="142" mass="16424">MDQKIPYDDYQLPVVFLPSYENPPAWIPPQERIHHPDYNNELAQFLPRTIVLKKPPGAQLGFNIRGGKASQLGIFISKVVPDSDAHRAGLQEGDQVLSVNEVDFQDIEHSRAVEILKTAREILMKVRYFPYNYQRQKERTVH</sequence>
<name>PDZ11_DANRE</name>
<evidence type="ECO:0000250" key="1">
    <source>
        <dbReference type="UniProtKB" id="Q5EBL8"/>
    </source>
</evidence>
<evidence type="ECO:0000255" key="2">
    <source>
        <dbReference type="PROSITE-ProRule" id="PRU00143"/>
    </source>
</evidence>
<gene>
    <name type="primary">pdzd11</name>
    <name type="synonym">pdzk11</name>
    <name type="ORF">zgc:77536</name>
</gene>
<proteinExistence type="evidence at transcript level"/>
<comment type="subcellular location">
    <subcellularLocation>
        <location evidence="1">Cytoplasm</location>
    </subcellularLocation>
</comment>
<protein>
    <recommendedName>
        <fullName>PDZ domain-containing protein 11</fullName>
    </recommendedName>
</protein>
<keyword id="KW-0963">Cytoplasm</keyword>
<keyword id="KW-1185">Reference proteome</keyword>
<dbReference type="EMBL" id="BC067163">
    <property type="protein sequence ID" value="AAH67163.1"/>
    <property type="molecule type" value="mRNA"/>
</dbReference>
<dbReference type="RefSeq" id="NP_998122.1">
    <property type="nucleotide sequence ID" value="NM_212957.2"/>
</dbReference>
<dbReference type="SMR" id="Q6NXB2"/>
<dbReference type="FunCoup" id="Q6NXB2">
    <property type="interactions" value="1319"/>
</dbReference>
<dbReference type="STRING" id="7955.ENSDARP00000069672"/>
<dbReference type="PaxDb" id="7955-ENSDARP00000069672"/>
<dbReference type="Ensembl" id="ENSDART00000075187">
    <property type="protein sequence ID" value="ENSDARP00000069672"/>
    <property type="gene ID" value="ENSDARG00000053194"/>
</dbReference>
<dbReference type="Ensembl" id="ENSDART00000130680">
    <property type="protein sequence ID" value="ENSDARP00000111909"/>
    <property type="gene ID" value="ENSDARG00000053194"/>
</dbReference>
<dbReference type="Ensembl" id="ENSDART00000187113">
    <property type="protein sequence ID" value="ENSDARP00000155288"/>
    <property type="gene ID" value="ENSDARG00000116591"/>
</dbReference>
<dbReference type="GeneID" id="405893"/>
<dbReference type="KEGG" id="dre:405893"/>
<dbReference type="AGR" id="ZFIN:ZDB-GENE-040426-2544"/>
<dbReference type="CTD" id="51248"/>
<dbReference type="ZFIN" id="ZDB-GENE-040426-2544">
    <property type="gene designation" value="pdzd11"/>
</dbReference>
<dbReference type="eggNOG" id="KOG3528">
    <property type="taxonomic scope" value="Eukaryota"/>
</dbReference>
<dbReference type="HOGENOM" id="CLU_133335_0_0_1"/>
<dbReference type="InParanoid" id="Q6NXB2"/>
<dbReference type="OMA" id="RGGREHN"/>
<dbReference type="OrthoDB" id="6021951at2759"/>
<dbReference type="PhylomeDB" id="Q6NXB2"/>
<dbReference type="TreeFam" id="TF318964"/>
<dbReference type="Reactome" id="R-DRE-196780">
    <property type="pathway name" value="Biotin transport and metabolism"/>
</dbReference>
<dbReference type="Reactome" id="R-DRE-199220">
    <property type="pathway name" value="Vitamin B5 (pantothenate) metabolism"/>
</dbReference>
<dbReference type="Reactome" id="R-DRE-425397">
    <property type="pathway name" value="Transport of vitamins, nucleosides, and related molecules"/>
</dbReference>
<dbReference type="Reactome" id="R-DRE-6803544">
    <property type="pathway name" value="Ion influx/efflux at host-pathogen interface"/>
</dbReference>
<dbReference type="Reactome" id="R-DRE-936837">
    <property type="pathway name" value="Ion transport by P-type ATPases"/>
</dbReference>
<dbReference type="PRO" id="PR:Q6NXB2"/>
<dbReference type="Proteomes" id="UP000000437">
    <property type="component" value="Alternate scaffold 14"/>
</dbReference>
<dbReference type="Proteomes" id="UP000000437">
    <property type="component" value="Chromosome 14"/>
</dbReference>
<dbReference type="Bgee" id="ENSDARG00000053194">
    <property type="expression patterns" value="Expressed in brain and 28 other cell types or tissues"/>
</dbReference>
<dbReference type="ExpressionAtlas" id="Q6NXB2">
    <property type="expression patterns" value="baseline"/>
</dbReference>
<dbReference type="GO" id="GO:0016323">
    <property type="term" value="C:basolateral plasma membrane"/>
    <property type="evidence" value="ECO:0000250"/>
    <property type="project" value="UniProtKB"/>
</dbReference>
<dbReference type="GO" id="GO:0005911">
    <property type="term" value="C:cell-cell junction"/>
    <property type="evidence" value="ECO:0000318"/>
    <property type="project" value="GO_Central"/>
</dbReference>
<dbReference type="GO" id="GO:0005829">
    <property type="term" value="C:cytosol"/>
    <property type="evidence" value="ECO:0000250"/>
    <property type="project" value="UniProtKB"/>
</dbReference>
<dbReference type="GO" id="GO:0098793">
    <property type="term" value="C:presynapse"/>
    <property type="evidence" value="ECO:0007669"/>
    <property type="project" value="GOC"/>
</dbReference>
<dbReference type="GO" id="GO:0030674">
    <property type="term" value="F:protein-macromolecule adaptor activity"/>
    <property type="evidence" value="ECO:0000318"/>
    <property type="project" value="GO_Central"/>
</dbReference>
<dbReference type="GO" id="GO:0007269">
    <property type="term" value="P:neurotransmitter secretion"/>
    <property type="evidence" value="ECO:0000318"/>
    <property type="project" value="GO_Central"/>
</dbReference>
<dbReference type="GO" id="GO:0046931">
    <property type="term" value="P:pore complex assembly"/>
    <property type="evidence" value="ECO:0000318"/>
    <property type="project" value="GO_Central"/>
</dbReference>
<dbReference type="GO" id="GO:0008582">
    <property type="term" value="P:regulation of synaptic assembly at neuromuscular junction"/>
    <property type="evidence" value="ECO:0000318"/>
    <property type="project" value="GO_Central"/>
</dbReference>
<dbReference type="GO" id="GO:0048489">
    <property type="term" value="P:synaptic vesicle transport"/>
    <property type="evidence" value="ECO:0000318"/>
    <property type="project" value="GO_Central"/>
</dbReference>
<dbReference type="CDD" id="cd06752">
    <property type="entry name" value="PDZ_PDZD11-like"/>
    <property type="match status" value="1"/>
</dbReference>
<dbReference type="FunFam" id="2.30.42.10:FF:000096">
    <property type="entry name" value="PDZ domain-containing protein 11"/>
    <property type="match status" value="1"/>
</dbReference>
<dbReference type="Gene3D" id="2.30.42.10">
    <property type="match status" value="1"/>
</dbReference>
<dbReference type="InterPro" id="IPR051109">
    <property type="entry name" value="MAM_complex_regulator"/>
</dbReference>
<dbReference type="InterPro" id="IPR001478">
    <property type="entry name" value="PDZ"/>
</dbReference>
<dbReference type="InterPro" id="IPR036034">
    <property type="entry name" value="PDZ_sf"/>
</dbReference>
<dbReference type="PANTHER" id="PTHR14063">
    <property type="entry name" value="PROTEIN LIN-7 HOMOLOG"/>
    <property type="match status" value="1"/>
</dbReference>
<dbReference type="Pfam" id="PF00595">
    <property type="entry name" value="PDZ"/>
    <property type="match status" value="1"/>
</dbReference>
<dbReference type="SMART" id="SM00228">
    <property type="entry name" value="PDZ"/>
    <property type="match status" value="1"/>
</dbReference>
<dbReference type="SUPFAM" id="SSF50156">
    <property type="entry name" value="PDZ domain-like"/>
    <property type="match status" value="1"/>
</dbReference>
<dbReference type="PROSITE" id="PS50106">
    <property type="entry name" value="PDZ"/>
    <property type="match status" value="1"/>
</dbReference>
<accession>Q6NXB2</accession>
<organism>
    <name type="scientific">Danio rerio</name>
    <name type="common">Zebrafish</name>
    <name type="synonym">Brachydanio rerio</name>
    <dbReference type="NCBI Taxonomy" id="7955"/>
    <lineage>
        <taxon>Eukaryota</taxon>
        <taxon>Metazoa</taxon>
        <taxon>Chordata</taxon>
        <taxon>Craniata</taxon>
        <taxon>Vertebrata</taxon>
        <taxon>Euteleostomi</taxon>
        <taxon>Actinopterygii</taxon>
        <taxon>Neopterygii</taxon>
        <taxon>Teleostei</taxon>
        <taxon>Ostariophysi</taxon>
        <taxon>Cypriniformes</taxon>
        <taxon>Danionidae</taxon>
        <taxon>Danioninae</taxon>
        <taxon>Danio</taxon>
    </lineage>
</organism>
<feature type="chain" id="PRO_0000058271" description="PDZ domain-containing protein 11">
    <location>
        <begin position="1"/>
        <end position="142"/>
    </location>
</feature>
<feature type="domain" description="PDZ" evidence="2">
    <location>
        <begin position="49"/>
        <end position="131"/>
    </location>
</feature>